<gene>
    <name evidence="1" type="primary">nadK</name>
    <name type="ordered locus">NFA_19970</name>
</gene>
<keyword id="KW-0067">ATP-binding</keyword>
<keyword id="KW-0963">Cytoplasm</keyword>
<keyword id="KW-0418">Kinase</keyword>
<keyword id="KW-0520">NAD</keyword>
<keyword id="KW-0521">NADP</keyword>
<keyword id="KW-0547">Nucleotide-binding</keyword>
<keyword id="KW-1185">Reference proteome</keyword>
<keyword id="KW-0808">Transferase</keyword>
<dbReference type="EC" id="2.7.1.23" evidence="1"/>
<dbReference type="EMBL" id="AP006618">
    <property type="protein sequence ID" value="BAD56843.1"/>
    <property type="molecule type" value="Genomic_DNA"/>
</dbReference>
<dbReference type="RefSeq" id="WP_011208528.1">
    <property type="nucleotide sequence ID" value="NC_006361.1"/>
</dbReference>
<dbReference type="SMR" id="Q5YY98"/>
<dbReference type="STRING" id="247156.NFA_19970"/>
<dbReference type="GeneID" id="61132777"/>
<dbReference type="KEGG" id="nfa:NFA_19970"/>
<dbReference type="eggNOG" id="COG0061">
    <property type="taxonomic scope" value="Bacteria"/>
</dbReference>
<dbReference type="HOGENOM" id="CLU_008831_0_0_11"/>
<dbReference type="OrthoDB" id="9774737at2"/>
<dbReference type="Proteomes" id="UP000006820">
    <property type="component" value="Chromosome"/>
</dbReference>
<dbReference type="GO" id="GO:0005737">
    <property type="term" value="C:cytoplasm"/>
    <property type="evidence" value="ECO:0007669"/>
    <property type="project" value="UniProtKB-SubCell"/>
</dbReference>
<dbReference type="GO" id="GO:0005524">
    <property type="term" value="F:ATP binding"/>
    <property type="evidence" value="ECO:0007669"/>
    <property type="project" value="UniProtKB-KW"/>
</dbReference>
<dbReference type="GO" id="GO:0046872">
    <property type="term" value="F:metal ion binding"/>
    <property type="evidence" value="ECO:0007669"/>
    <property type="project" value="UniProtKB-UniRule"/>
</dbReference>
<dbReference type="GO" id="GO:0051287">
    <property type="term" value="F:NAD binding"/>
    <property type="evidence" value="ECO:0007669"/>
    <property type="project" value="UniProtKB-ARBA"/>
</dbReference>
<dbReference type="GO" id="GO:0003951">
    <property type="term" value="F:NAD+ kinase activity"/>
    <property type="evidence" value="ECO:0007669"/>
    <property type="project" value="UniProtKB-UniRule"/>
</dbReference>
<dbReference type="GO" id="GO:0019674">
    <property type="term" value="P:NAD metabolic process"/>
    <property type="evidence" value="ECO:0007669"/>
    <property type="project" value="InterPro"/>
</dbReference>
<dbReference type="GO" id="GO:0006741">
    <property type="term" value="P:NADP biosynthetic process"/>
    <property type="evidence" value="ECO:0007669"/>
    <property type="project" value="UniProtKB-UniRule"/>
</dbReference>
<dbReference type="FunFam" id="2.60.200.30:FF:000007">
    <property type="entry name" value="NAD kinase"/>
    <property type="match status" value="1"/>
</dbReference>
<dbReference type="Gene3D" id="3.40.50.10330">
    <property type="entry name" value="Probable inorganic polyphosphate/atp-NAD kinase, domain 1"/>
    <property type="match status" value="1"/>
</dbReference>
<dbReference type="Gene3D" id="2.60.200.30">
    <property type="entry name" value="Probable inorganic polyphosphate/atp-NAD kinase, domain 2"/>
    <property type="match status" value="1"/>
</dbReference>
<dbReference type="HAMAP" id="MF_00361">
    <property type="entry name" value="NAD_kinase"/>
    <property type="match status" value="1"/>
</dbReference>
<dbReference type="InterPro" id="IPR017438">
    <property type="entry name" value="ATP-NAD_kinase_N"/>
</dbReference>
<dbReference type="InterPro" id="IPR017437">
    <property type="entry name" value="ATP-NAD_kinase_PpnK-typ_C"/>
</dbReference>
<dbReference type="InterPro" id="IPR016064">
    <property type="entry name" value="NAD/diacylglycerol_kinase_sf"/>
</dbReference>
<dbReference type="InterPro" id="IPR002504">
    <property type="entry name" value="NADK"/>
</dbReference>
<dbReference type="NCBIfam" id="NF002892">
    <property type="entry name" value="PRK03372.1"/>
    <property type="match status" value="1"/>
</dbReference>
<dbReference type="PANTHER" id="PTHR20275">
    <property type="entry name" value="NAD KINASE"/>
    <property type="match status" value="1"/>
</dbReference>
<dbReference type="PANTHER" id="PTHR20275:SF0">
    <property type="entry name" value="NAD KINASE"/>
    <property type="match status" value="1"/>
</dbReference>
<dbReference type="Pfam" id="PF01513">
    <property type="entry name" value="NAD_kinase"/>
    <property type="match status" value="1"/>
</dbReference>
<dbReference type="Pfam" id="PF20143">
    <property type="entry name" value="NAD_kinase_C"/>
    <property type="match status" value="1"/>
</dbReference>
<dbReference type="SUPFAM" id="SSF111331">
    <property type="entry name" value="NAD kinase/diacylglycerol kinase-like"/>
    <property type="match status" value="1"/>
</dbReference>
<organism>
    <name type="scientific">Nocardia farcinica (strain IFM 10152)</name>
    <dbReference type="NCBI Taxonomy" id="247156"/>
    <lineage>
        <taxon>Bacteria</taxon>
        <taxon>Bacillati</taxon>
        <taxon>Actinomycetota</taxon>
        <taxon>Actinomycetes</taxon>
        <taxon>Mycobacteriales</taxon>
        <taxon>Nocardiaceae</taxon>
        <taxon>Nocardia</taxon>
    </lineage>
</organism>
<name>NADK_NOCFA</name>
<protein>
    <recommendedName>
        <fullName evidence="1">NAD kinase</fullName>
        <ecNumber evidence="1">2.7.1.23</ecNumber>
    </recommendedName>
    <alternativeName>
        <fullName evidence="1">ATP-dependent NAD kinase</fullName>
    </alternativeName>
</protein>
<sequence>MSGSGDREILLIAHPGRAEIVETAHRAAKIFTEAGIGLRVLADEAPSTRFDSRAEPAPVTGPAGDAVRVVEHSAAAAVGCEMVLALGGDGTFLRAAELARPASVPVLGINLGRIGFLTEAEAEHLDEALGQVVRGDYRVEDRMTIDVTVRVEDEVVESGWALNEASIENASRMGVLEVVLEVDGRPVSAFGCDGILIATPTGSTAYAFSAGGPVVWPELEALLVIPSNAHALFARPLVTSPESRIAVESVATGHDAIVFLDGRRTLALPRGGRVEAVRGSEPVRWVRLDSAPFADRMVRKFQLPVTGWRGRRRTESTRADRDQD</sequence>
<accession>Q5YY98</accession>
<proteinExistence type="inferred from homology"/>
<evidence type="ECO:0000255" key="1">
    <source>
        <dbReference type="HAMAP-Rule" id="MF_00361"/>
    </source>
</evidence>
<feature type="chain" id="PRO_0000229660" description="NAD kinase">
    <location>
        <begin position="1"/>
        <end position="324"/>
    </location>
</feature>
<feature type="active site" description="Proton acceptor" evidence="1">
    <location>
        <position position="89"/>
    </location>
</feature>
<feature type="binding site" evidence="1">
    <location>
        <begin position="89"/>
        <end position="90"/>
    </location>
    <ligand>
        <name>NAD(+)</name>
        <dbReference type="ChEBI" id="CHEBI:57540"/>
    </ligand>
</feature>
<feature type="binding site" evidence="1">
    <location>
        <position position="94"/>
    </location>
    <ligand>
        <name>NAD(+)</name>
        <dbReference type="ChEBI" id="CHEBI:57540"/>
    </ligand>
</feature>
<feature type="binding site" evidence="1">
    <location>
        <begin position="163"/>
        <end position="164"/>
    </location>
    <ligand>
        <name>NAD(+)</name>
        <dbReference type="ChEBI" id="CHEBI:57540"/>
    </ligand>
</feature>
<feature type="binding site" evidence="1">
    <location>
        <position position="193"/>
    </location>
    <ligand>
        <name>NAD(+)</name>
        <dbReference type="ChEBI" id="CHEBI:57540"/>
    </ligand>
</feature>
<feature type="binding site" evidence="1">
    <location>
        <begin position="204"/>
        <end position="209"/>
    </location>
    <ligand>
        <name>NAD(+)</name>
        <dbReference type="ChEBI" id="CHEBI:57540"/>
    </ligand>
</feature>
<reference key="1">
    <citation type="journal article" date="2004" name="Proc. Natl. Acad. Sci. U.S.A.">
        <title>The complete genomic sequence of Nocardia farcinica IFM 10152.</title>
        <authorList>
            <person name="Ishikawa J."/>
            <person name="Yamashita A."/>
            <person name="Mikami Y."/>
            <person name="Hoshino Y."/>
            <person name="Kurita H."/>
            <person name="Hotta K."/>
            <person name="Shiba T."/>
            <person name="Hattori M."/>
        </authorList>
    </citation>
    <scope>NUCLEOTIDE SEQUENCE [LARGE SCALE GENOMIC DNA]</scope>
    <source>
        <strain>IFM 10152</strain>
    </source>
</reference>
<comment type="function">
    <text evidence="1">Involved in the regulation of the intracellular balance of NAD and NADP, and is a key enzyme in the biosynthesis of NADP. Catalyzes specifically the phosphorylation on 2'-hydroxyl of the adenosine moiety of NAD to yield NADP.</text>
</comment>
<comment type="catalytic activity">
    <reaction evidence="1">
        <text>NAD(+) + ATP = ADP + NADP(+) + H(+)</text>
        <dbReference type="Rhea" id="RHEA:18629"/>
        <dbReference type="ChEBI" id="CHEBI:15378"/>
        <dbReference type="ChEBI" id="CHEBI:30616"/>
        <dbReference type="ChEBI" id="CHEBI:57540"/>
        <dbReference type="ChEBI" id="CHEBI:58349"/>
        <dbReference type="ChEBI" id="CHEBI:456216"/>
        <dbReference type="EC" id="2.7.1.23"/>
    </reaction>
</comment>
<comment type="cofactor">
    <cofactor evidence="1">
        <name>a divalent metal cation</name>
        <dbReference type="ChEBI" id="CHEBI:60240"/>
    </cofactor>
</comment>
<comment type="subcellular location">
    <subcellularLocation>
        <location evidence="1">Cytoplasm</location>
    </subcellularLocation>
</comment>
<comment type="similarity">
    <text evidence="1">Belongs to the NAD kinase family.</text>
</comment>